<comment type="function">
    <text evidence="1">Digests double-stranded RNA. Involved in the processing of primary rRNA transcript to yield the immediate precursors to the large and small rRNAs (23S and 16S). Processes some mRNAs, and tRNAs when they are encoded in the rRNA operon. Processes pre-crRNA and tracrRNA of type II CRISPR loci if present in the organism.</text>
</comment>
<comment type="catalytic activity">
    <reaction evidence="1">
        <text>Endonucleolytic cleavage to 5'-phosphomonoester.</text>
        <dbReference type="EC" id="3.1.26.3"/>
    </reaction>
</comment>
<comment type="cofactor">
    <cofactor evidence="1">
        <name>Mg(2+)</name>
        <dbReference type="ChEBI" id="CHEBI:18420"/>
    </cofactor>
</comment>
<comment type="subunit">
    <text evidence="1">Homodimer.</text>
</comment>
<comment type="subcellular location">
    <subcellularLocation>
        <location evidence="1">Cytoplasm</location>
    </subcellularLocation>
</comment>
<comment type="similarity">
    <text evidence="1">Belongs to the ribonuclease III family.</text>
</comment>
<organism>
    <name type="scientific">Allorhizobium ampelinum (strain ATCC BAA-846 / DSM 112012 / S4)</name>
    <name type="common">Agrobacterium vitis (strain S4)</name>
    <dbReference type="NCBI Taxonomy" id="311402"/>
    <lineage>
        <taxon>Bacteria</taxon>
        <taxon>Pseudomonadati</taxon>
        <taxon>Pseudomonadota</taxon>
        <taxon>Alphaproteobacteria</taxon>
        <taxon>Hyphomicrobiales</taxon>
        <taxon>Rhizobiaceae</taxon>
        <taxon>Rhizobium/Agrobacterium group</taxon>
        <taxon>Allorhizobium</taxon>
        <taxon>Allorhizobium ampelinum</taxon>
    </lineage>
</organism>
<reference key="1">
    <citation type="journal article" date="2009" name="J. Bacteriol.">
        <title>Genome sequences of three Agrobacterium biovars help elucidate the evolution of multichromosome genomes in bacteria.</title>
        <authorList>
            <person name="Slater S.C."/>
            <person name="Goldman B.S."/>
            <person name="Goodner B."/>
            <person name="Setubal J.C."/>
            <person name="Farrand S.K."/>
            <person name="Nester E.W."/>
            <person name="Burr T.J."/>
            <person name="Banta L."/>
            <person name="Dickerman A.W."/>
            <person name="Paulsen I."/>
            <person name="Otten L."/>
            <person name="Suen G."/>
            <person name="Welch R."/>
            <person name="Almeida N.F."/>
            <person name="Arnold F."/>
            <person name="Burton O.T."/>
            <person name="Du Z."/>
            <person name="Ewing A."/>
            <person name="Godsy E."/>
            <person name="Heisel S."/>
            <person name="Houmiel K.L."/>
            <person name="Jhaveri J."/>
            <person name="Lu J."/>
            <person name="Miller N.M."/>
            <person name="Norton S."/>
            <person name="Chen Q."/>
            <person name="Phoolcharoen W."/>
            <person name="Ohlin V."/>
            <person name="Ondrusek D."/>
            <person name="Pride N."/>
            <person name="Stricklin S.L."/>
            <person name="Sun J."/>
            <person name="Wheeler C."/>
            <person name="Wilson L."/>
            <person name="Zhu H."/>
            <person name="Wood D.W."/>
        </authorList>
    </citation>
    <scope>NUCLEOTIDE SEQUENCE [LARGE SCALE GENOMIC DNA]</scope>
    <source>
        <strain>ATCC BAA-846 / DSM 112012 / S4</strain>
    </source>
</reference>
<accession>B9JUN7</accession>
<dbReference type="EC" id="3.1.26.3" evidence="1"/>
<dbReference type="EMBL" id="CP000633">
    <property type="protein sequence ID" value="ACM36032.1"/>
    <property type="molecule type" value="Genomic_DNA"/>
</dbReference>
<dbReference type="RefSeq" id="WP_015915456.1">
    <property type="nucleotide sequence ID" value="NC_011989.1"/>
</dbReference>
<dbReference type="SMR" id="B9JUN7"/>
<dbReference type="STRING" id="311402.Avi_1449"/>
<dbReference type="KEGG" id="avi:Avi_1449"/>
<dbReference type="eggNOG" id="COG0571">
    <property type="taxonomic scope" value="Bacteria"/>
</dbReference>
<dbReference type="HOGENOM" id="CLU_000907_1_1_5"/>
<dbReference type="Proteomes" id="UP000001596">
    <property type="component" value="Chromosome 1"/>
</dbReference>
<dbReference type="GO" id="GO:0005737">
    <property type="term" value="C:cytoplasm"/>
    <property type="evidence" value="ECO:0007669"/>
    <property type="project" value="UniProtKB-SubCell"/>
</dbReference>
<dbReference type="GO" id="GO:0003725">
    <property type="term" value="F:double-stranded RNA binding"/>
    <property type="evidence" value="ECO:0007669"/>
    <property type="project" value="TreeGrafter"/>
</dbReference>
<dbReference type="GO" id="GO:0046872">
    <property type="term" value="F:metal ion binding"/>
    <property type="evidence" value="ECO:0007669"/>
    <property type="project" value="UniProtKB-KW"/>
</dbReference>
<dbReference type="GO" id="GO:0004525">
    <property type="term" value="F:ribonuclease III activity"/>
    <property type="evidence" value="ECO:0007669"/>
    <property type="project" value="UniProtKB-UniRule"/>
</dbReference>
<dbReference type="GO" id="GO:0019843">
    <property type="term" value="F:rRNA binding"/>
    <property type="evidence" value="ECO:0007669"/>
    <property type="project" value="UniProtKB-KW"/>
</dbReference>
<dbReference type="GO" id="GO:0006397">
    <property type="term" value="P:mRNA processing"/>
    <property type="evidence" value="ECO:0007669"/>
    <property type="project" value="UniProtKB-UniRule"/>
</dbReference>
<dbReference type="GO" id="GO:0010468">
    <property type="term" value="P:regulation of gene expression"/>
    <property type="evidence" value="ECO:0007669"/>
    <property type="project" value="TreeGrafter"/>
</dbReference>
<dbReference type="GO" id="GO:0006364">
    <property type="term" value="P:rRNA processing"/>
    <property type="evidence" value="ECO:0007669"/>
    <property type="project" value="UniProtKB-UniRule"/>
</dbReference>
<dbReference type="GO" id="GO:0008033">
    <property type="term" value="P:tRNA processing"/>
    <property type="evidence" value="ECO:0007669"/>
    <property type="project" value="UniProtKB-KW"/>
</dbReference>
<dbReference type="CDD" id="cd10845">
    <property type="entry name" value="DSRM_RNAse_III_family"/>
    <property type="match status" value="1"/>
</dbReference>
<dbReference type="CDD" id="cd00593">
    <property type="entry name" value="RIBOc"/>
    <property type="match status" value="1"/>
</dbReference>
<dbReference type="Gene3D" id="3.30.160.20">
    <property type="match status" value="1"/>
</dbReference>
<dbReference type="Gene3D" id="1.10.1520.10">
    <property type="entry name" value="Ribonuclease III domain"/>
    <property type="match status" value="1"/>
</dbReference>
<dbReference type="HAMAP" id="MF_00104">
    <property type="entry name" value="RNase_III"/>
    <property type="match status" value="1"/>
</dbReference>
<dbReference type="InterPro" id="IPR014720">
    <property type="entry name" value="dsRBD_dom"/>
</dbReference>
<dbReference type="InterPro" id="IPR011907">
    <property type="entry name" value="RNase_III"/>
</dbReference>
<dbReference type="InterPro" id="IPR000999">
    <property type="entry name" value="RNase_III_dom"/>
</dbReference>
<dbReference type="InterPro" id="IPR036389">
    <property type="entry name" value="RNase_III_sf"/>
</dbReference>
<dbReference type="NCBIfam" id="TIGR02191">
    <property type="entry name" value="RNaseIII"/>
    <property type="match status" value="1"/>
</dbReference>
<dbReference type="PANTHER" id="PTHR11207:SF0">
    <property type="entry name" value="RIBONUCLEASE 3"/>
    <property type="match status" value="1"/>
</dbReference>
<dbReference type="PANTHER" id="PTHR11207">
    <property type="entry name" value="RIBONUCLEASE III"/>
    <property type="match status" value="1"/>
</dbReference>
<dbReference type="Pfam" id="PF00035">
    <property type="entry name" value="dsrm"/>
    <property type="match status" value="1"/>
</dbReference>
<dbReference type="Pfam" id="PF14622">
    <property type="entry name" value="Ribonucleas_3_3"/>
    <property type="match status" value="1"/>
</dbReference>
<dbReference type="SMART" id="SM00358">
    <property type="entry name" value="DSRM"/>
    <property type="match status" value="1"/>
</dbReference>
<dbReference type="SMART" id="SM00535">
    <property type="entry name" value="RIBOc"/>
    <property type="match status" value="1"/>
</dbReference>
<dbReference type="SUPFAM" id="SSF54768">
    <property type="entry name" value="dsRNA-binding domain-like"/>
    <property type="match status" value="1"/>
</dbReference>
<dbReference type="SUPFAM" id="SSF69065">
    <property type="entry name" value="RNase III domain-like"/>
    <property type="match status" value="1"/>
</dbReference>
<dbReference type="PROSITE" id="PS50137">
    <property type="entry name" value="DS_RBD"/>
    <property type="match status" value="1"/>
</dbReference>
<dbReference type="PROSITE" id="PS00517">
    <property type="entry name" value="RNASE_3_1"/>
    <property type="match status" value="1"/>
</dbReference>
<dbReference type="PROSITE" id="PS50142">
    <property type="entry name" value="RNASE_3_2"/>
    <property type="match status" value="1"/>
</dbReference>
<gene>
    <name evidence="1" type="primary">rnc</name>
    <name type="ordered locus">Avi_1449</name>
</gene>
<keyword id="KW-0963">Cytoplasm</keyword>
<keyword id="KW-0255">Endonuclease</keyword>
<keyword id="KW-0378">Hydrolase</keyword>
<keyword id="KW-0460">Magnesium</keyword>
<keyword id="KW-0479">Metal-binding</keyword>
<keyword id="KW-0507">mRNA processing</keyword>
<keyword id="KW-0540">Nuclease</keyword>
<keyword id="KW-1185">Reference proteome</keyword>
<keyword id="KW-0694">RNA-binding</keyword>
<keyword id="KW-0698">rRNA processing</keyword>
<keyword id="KW-0699">rRNA-binding</keyword>
<keyword id="KW-0819">tRNA processing</keyword>
<evidence type="ECO:0000255" key="1">
    <source>
        <dbReference type="HAMAP-Rule" id="MF_00104"/>
    </source>
</evidence>
<protein>
    <recommendedName>
        <fullName evidence="1">Ribonuclease 3</fullName>
        <ecNumber evidence="1">3.1.26.3</ecNumber>
    </recommendedName>
    <alternativeName>
        <fullName evidence="1">Ribonuclease III</fullName>
        <shortName evidence="1">RNase III</shortName>
    </alternativeName>
</protein>
<name>RNC_ALLAM</name>
<proteinExistence type="inferred from homology"/>
<feature type="chain" id="PRO_1000202833" description="Ribonuclease 3">
    <location>
        <begin position="1"/>
        <end position="239"/>
    </location>
</feature>
<feature type="domain" description="RNase III" evidence="1">
    <location>
        <begin position="12"/>
        <end position="137"/>
    </location>
</feature>
<feature type="domain" description="DRBM" evidence="1">
    <location>
        <begin position="162"/>
        <end position="231"/>
    </location>
</feature>
<feature type="active site" evidence="1">
    <location>
        <position position="54"/>
    </location>
</feature>
<feature type="active site" evidence="1">
    <location>
        <position position="126"/>
    </location>
</feature>
<feature type="binding site" evidence="1">
    <location>
        <position position="50"/>
    </location>
    <ligand>
        <name>Mg(2+)</name>
        <dbReference type="ChEBI" id="CHEBI:18420"/>
    </ligand>
</feature>
<feature type="binding site" evidence="1">
    <location>
        <position position="123"/>
    </location>
    <ligand>
        <name>Mg(2+)</name>
        <dbReference type="ChEBI" id="CHEBI:18420"/>
    </ligand>
</feature>
<feature type="binding site" evidence="1">
    <location>
        <position position="126"/>
    </location>
    <ligand>
        <name>Mg(2+)</name>
        <dbReference type="ChEBI" id="CHEBI:18420"/>
    </ligand>
</feature>
<sequence>MKAPKALTAEEREKVEAVIGYHFIGKERLDKALTHSSARPAKGSDYERLEFLGDRVLGLCVAEHLFKVFRAATEGELSVRLNQLVSAETCAAVADEIQLHRYIRTGADVKKLTDKNMLNVRADVVESLIAAIYLDAGLEAARAFVLKFWAERASRQDAGRRDAKTELQEWAHAKFAVTPVYRVADRSGPDHDPSFTVTVEIGKLEPETGIDRSKRAAEQAAATRLLEREGVWTRSTASD</sequence>